<sequence>GVLDILKNAAKNILAHAAEQI</sequence>
<keyword id="KW-0027">Amidation</keyword>
<keyword id="KW-0878">Amphibian defense peptide</keyword>
<keyword id="KW-0044">Antibiotic</keyword>
<keyword id="KW-0929">Antimicrobial</keyword>
<keyword id="KW-0204">Cytolysis</keyword>
<keyword id="KW-0903">Direct protein sequencing</keyword>
<keyword id="KW-0354">Hemolysis</keyword>
<keyword id="KW-0964">Secreted</keyword>
<feature type="peptide" id="PRO_0000043817" description="Ocellatin-3">
    <location>
        <begin position="1"/>
        <end position="21"/>
    </location>
</feature>
<feature type="modified residue" description="Isoleucine amide" evidence="1">
    <location>
        <position position="21"/>
    </location>
</feature>
<comment type="function">
    <text evidence="1 2">Has hemolytic activity against human erythrocytes and antibacterial activity against the Gram-negative bacterium E.coli.</text>
</comment>
<comment type="subcellular location">
    <subcellularLocation>
        <location>Secreted</location>
    </subcellularLocation>
</comment>
<comment type="tissue specificity">
    <text>Expressed by the skin dorsal glands.</text>
</comment>
<comment type="mass spectrometry"/>
<comment type="similarity">
    <text evidence="2">Belongs to the frog skin active peptide (FSAP) family. Ocellatin subfamily.</text>
</comment>
<comment type="online information" name="The antimicrobial peptide database">
    <link uri="https://wangapd3.com/database/query_output.php?ID=00545"/>
</comment>
<name>OCE3_LEPOE</name>
<dbReference type="GO" id="GO:0005576">
    <property type="term" value="C:extracellular region"/>
    <property type="evidence" value="ECO:0007669"/>
    <property type="project" value="UniProtKB-SubCell"/>
</dbReference>
<dbReference type="GO" id="GO:0042742">
    <property type="term" value="P:defense response to bacterium"/>
    <property type="evidence" value="ECO:0007669"/>
    <property type="project" value="UniProtKB-KW"/>
</dbReference>
<dbReference type="GO" id="GO:0019836">
    <property type="term" value="P:symbiont-mediated hemolysis of host erythrocyte"/>
    <property type="evidence" value="ECO:0007669"/>
    <property type="project" value="InterPro"/>
</dbReference>
<dbReference type="InterPro" id="IPR012518">
    <property type="entry name" value="Antimicrobial15"/>
</dbReference>
<dbReference type="Pfam" id="PF08110">
    <property type="entry name" value="Antimicrobial15"/>
    <property type="match status" value="1"/>
</dbReference>
<protein>
    <recommendedName>
        <fullName>Ocellatin-3</fullName>
    </recommendedName>
</protein>
<evidence type="ECO:0000269" key="1">
    <source>
    </source>
</evidence>
<evidence type="ECO:0000305" key="2"/>
<reference key="1">
    <citation type="journal article" date="2004" name="Protein J.">
        <title>Ocellatins: new antimicrobial peptides from the skin secretion of the South American frog Leptodactylus ocellatus (Anura: Leptodactylidae).</title>
        <authorList>
            <person name="Nascimento A.C.C."/>
            <person name="Zanotta L.C."/>
            <person name="Kyaw C.M."/>
            <person name="Schwartz E.N.F."/>
            <person name="Schwartz C.A."/>
            <person name="Sebben A."/>
            <person name="Sousa M.V."/>
            <person name="Fontes W."/>
            <person name="Castro M.S."/>
        </authorList>
    </citation>
    <scope>PROTEIN SEQUENCE</scope>
    <scope>FUNCTION</scope>
    <scope>MASS SPECTROMETRY</scope>
    <scope>AMIDATION AT ILE-21</scope>
    <source>
        <tissue>Skin secretion</tissue>
    </source>
</reference>
<accession>P83867</accession>
<organism evidence="2">
    <name type="scientific">Leptodactylus ocellatus</name>
    <name type="common">Argus frog</name>
    <name type="synonym">Leptodactylus macrosternum</name>
    <dbReference type="NCBI Taxonomy" id="928525"/>
    <lineage>
        <taxon>Eukaryota</taxon>
        <taxon>Metazoa</taxon>
        <taxon>Chordata</taxon>
        <taxon>Craniata</taxon>
        <taxon>Vertebrata</taxon>
        <taxon>Euteleostomi</taxon>
        <taxon>Amphibia</taxon>
        <taxon>Batrachia</taxon>
        <taxon>Anura</taxon>
        <taxon>Neobatrachia</taxon>
        <taxon>Hyloidea</taxon>
        <taxon>Leptodactylidae</taxon>
        <taxon>Leptodactylinae</taxon>
        <taxon>Leptodactylus</taxon>
    </lineage>
</organism>
<proteinExistence type="evidence at protein level"/>